<reference key="1">
    <citation type="journal article" date="2002" name="Proc. Natl. Acad. Sci. U.S.A.">
        <title>Extensive mosaic structure revealed by the complete genome sequence of uropathogenic Escherichia coli.</title>
        <authorList>
            <person name="Welch R.A."/>
            <person name="Burland V."/>
            <person name="Plunkett G. III"/>
            <person name="Redford P."/>
            <person name="Roesch P."/>
            <person name="Rasko D."/>
            <person name="Buckles E.L."/>
            <person name="Liou S.-R."/>
            <person name="Boutin A."/>
            <person name="Hackett J."/>
            <person name="Stroud D."/>
            <person name="Mayhew G.F."/>
            <person name="Rose D.J."/>
            <person name="Zhou S."/>
            <person name="Schwartz D.C."/>
            <person name="Perna N.T."/>
            <person name="Mobley H.L.T."/>
            <person name="Donnenberg M.S."/>
            <person name="Blattner F.R."/>
        </authorList>
    </citation>
    <scope>NUCLEOTIDE SEQUENCE [LARGE SCALE GENOMIC DNA]</scope>
    <source>
        <strain>CFT073 / ATCC 700928 / UPEC</strain>
    </source>
</reference>
<protein>
    <recommendedName>
        <fullName>Phospho-2-dehydro-3-deoxyheptonate aldolase, Trp-sensitive</fullName>
        <ecNumber>2.5.1.54</ecNumber>
    </recommendedName>
    <alternativeName>
        <fullName>3-deoxy-D-arabino-heptulosonate 7-phosphate synthase</fullName>
    </alternativeName>
    <alternativeName>
        <fullName>DAHP synthase</fullName>
    </alternativeName>
    <alternativeName>
        <fullName>Phospho-2-keto-3-deoxyheptonate aldolase</fullName>
    </alternativeName>
</protein>
<keyword id="KW-0028">Amino-acid biosynthesis</keyword>
<keyword id="KW-0057">Aromatic amino acid biosynthesis</keyword>
<keyword id="KW-1185">Reference proteome</keyword>
<keyword id="KW-0808">Transferase</keyword>
<feature type="chain" id="PRO_0000140841" description="Phospho-2-dehydro-3-deoxyheptonate aldolase, Trp-sensitive">
    <location>
        <begin position="1"/>
        <end position="348"/>
    </location>
</feature>
<gene>
    <name type="primary">aroH</name>
    <name type="ordered locus">c2100</name>
</gene>
<sequence length="348" mass="38705">MNRTDELRTARIESLVTPAELALRYPVTPGVATHVTDSRRRIEKILNGEDKRLLVIIGPCSIHDLTAAMEYATRLQSLRNQYQSRLEIVMRTYFEKPRTVVGWKGLISDPDLNGSYRVNHGLELARKLLLQVNELGVPTATEFLDMVTGQFIADLISWGAIGARTTESQIHREMASALSCPVGFKNGTDGNTRIAVDAIRAARASHMFLSPDKNGQMTIYQTSGNPYGHIIMRGGKKPNYHADDIAAACDTLHEFDLPEHLVVDFSHGNCQKQHRRQLEVCEDICQQIRNGSTAIAGIMAESFLREGTQKIVGGQPLTYGQSITDPCLGWEDTERLVEKLASAVDTRF</sequence>
<evidence type="ECO:0000250" key="1"/>
<evidence type="ECO:0000305" key="2"/>
<accession>Q8FH32</accession>
<dbReference type="EC" id="2.5.1.54"/>
<dbReference type="EMBL" id="AE014075">
    <property type="protein sequence ID" value="AAN80560.1"/>
    <property type="molecule type" value="Genomic_DNA"/>
</dbReference>
<dbReference type="RefSeq" id="WP_001082226.1">
    <property type="nucleotide sequence ID" value="NZ_CP051263.1"/>
</dbReference>
<dbReference type="SMR" id="Q8FH32"/>
<dbReference type="STRING" id="199310.c2100"/>
<dbReference type="GeneID" id="75203547"/>
<dbReference type="KEGG" id="ecc:c2100"/>
<dbReference type="eggNOG" id="COG0722">
    <property type="taxonomic scope" value="Bacteria"/>
</dbReference>
<dbReference type="HOGENOM" id="CLU_030903_0_1_6"/>
<dbReference type="BioCyc" id="ECOL199310:C2100-MONOMER"/>
<dbReference type="UniPathway" id="UPA00053">
    <property type="reaction ID" value="UER00084"/>
</dbReference>
<dbReference type="Proteomes" id="UP000001410">
    <property type="component" value="Chromosome"/>
</dbReference>
<dbReference type="GO" id="GO:0005737">
    <property type="term" value="C:cytoplasm"/>
    <property type="evidence" value="ECO:0007669"/>
    <property type="project" value="TreeGrafter"/>
</dbReference>
<dbReference type="GO" id="GO:0003849">
    <property type="term" value="F:3-deoxy-7-phosphoheptulonate synthase activity"/>
    <property type="evidence" value="ECO:0007669"/>
    <property type="project" value="UniProtKB-EC"/>
</dbReference>
<dbReference type="GO" id="GO:0008652">
    <property type="term" value="P:amino acid biosynthetic process"/>
    <property type="evidence" value="ECO:0007669"/>
    <property type="project" value="UniProtKB-KW"/>
</dbReference>
<dbReference type="GO" id="GO:0009073">
    <property type="term" value="P:aromatic amino acid family biosynthetic process"/>
    <property type="evidence" value="ECO:0007669"/>
    <property type="project" value="UniProtKB-KW"/>
</dbReference>
<dbReference type="GO" id="GO:0009423">
    <property type="term" value="P:chorismate biosynthetic process"/>
    <property type="evidence" value="ECO:0007669"/>
    <property type="project" value="UniProtKB-UniPathway"/>
</dbReference>
<dbReference type="FunFam" id="3.20.20.70:FF:000005">
    <property type="entry name" value="Phospho-2-dehydro-3-deoxyheptonate aldolase"/>
    <property type="match status" value="1"/>
</dbReference>
<dbReference type="Gene3D" id="3.20.20.70">
    <property type="entry name" value="Aldolase class I"/>
    <property type="match status" value="1"/>
</dbReference>
<dbReference type="InterPro" id="IPR013785">
    <property type="entry name" value="Aldolase_TIM"/>
</dbReference>
<dbReference type="InterPro" id="IPR006218">
    <property type="entry name" value="DAHP1/KDSA"/>
</dbReference>
<dbReference type="InterPro" id="IPR006219">
    <property type="entry name" value="DAHP_synth_1"/>
</dbReference>
<dbReference type="NCBIfam" id="TIGR00034">
    <property type="entry name" value="aroFGH"/>
    <property type="match status" value="1"/>
</dbReference>
<dbReference type="NCBIfam" id="NF009395">
    <property type="entry name" value="PRK12755.1"/>
    <property type="match status" value="1"/>
</dbReference>
<dbReference type="NCBIfam" id="NF009396">
    <property type="entry name" value="PRK12756.1"/>
    <property type="match status" value="1"/>
</dbReference>
<dbReference type="PANTHER" id="PTHR21225">
    <property type="entry name" value="PHOSPHO-2-DEHYDRO-3-DEOXYHEPTONATE ALDOLASE DAHP SYNTHETASE"/>
    <property type="match status" value="1"/>
</dbReference>
<dbReference type="PANTHER" id="PTHR21225:SF6">
    <property type="entry name" value="PHOSPHO-2-DEHYDRO-3-DEOXYHEPTONATE ALDOLASE, TRP-SENSITIVE"/>
    <property type="match status" value="1"/>
</dbReference>
<dbReference type="Pfam" id="PF00793">
    <property type="entry name" value="DAHP_synth_1"/>
    <property type="match status" value="1"/>
</dbReference>
<dbReference type="PIRSF" id="PIRSF001361">
    <property type="entry name" value="DAHP_synthase"/>
    <property type="match status" value="1"/>
</dbReference>
<dbReference type="SUPFAM" id="SSF51569">
    <property type="entry name" value="Aldolase"/>
    <property type="match status" value="1"/>
</dbReference>
<organism>
    <name type="scientific">Escherichia coli O6:H1 (strain CFT073 / ATCC 700928 / UPEC)</name>
    <dbReference type="NCBI Taxonomy" id="199310"/>
    <lineage>
        <taxon>Bacteria</taxon>
        <taxon>Pseudomonadati</taxon>
        <taxon>Pseudomonadota</taxon>
        <taxon>Gammaproteobacteria</taxon>
        <taxon>Enterobacterales</taxon>
        <taxon>Enterobacteriaceae</taxon>
        <taxon>Escherichia</taxon>
    </lineage>
</organism>
<name>AROH_ECOL6</name>
<comment type="function">
    <text evidence="1">Stereospecific condensation of phosphoenolpyruvate (PEP) and D-erythrose-4-phosphate (E4P) giving rise to 3-deoxy-D-arabino-heptulosonate-7-phosphate (DAHP).</text>
</comment>
<comment type="catalytic activity">
    <reaction>
        <text>D-erythrose 4-phosphate + phosphoenolpyruvate + H2O = 7-phospho-2-dehydro-3-deoxy-D-arabino-heptonate + phosphate</text>
        <dbReference type="Rhea" id="RHEA:14717"/>
        <dbReference type="ChEBI" id="CHEBI:15377"/>
        <dbReference type="ChEBI" id="CHEBI:16897"/>
        <dbReference type="ChEBI" id="CHEBI:43474"/>
        <dbReference type="ChEBI" id="CHEBI:58394"/>
        <dbReference type="ChEBI" id="CHEBI:58702"/>
        <dbReference type="EC" id="2.5.1.54"/>
    </reaction>
</comment>
<comment type="pathway">
    <text>Metabolic intermediate biosynthesis; chorismate biosynthesis; chorismate from D-erythrose 4-phosphate and phosphoenolpyruvate: step 1/7.</text>
</comment>
<comment type="similarity">
    <text evidence="2">Belongs to the class-I DAHP synthase family.</text>
</comment>
<proteinExistence type="inferred from homology"/>